<reference key="1">
    <citation type="journal article" date="2001" name="Gene">
        <title>Molecular cloning and characterization of a thioredoxin/nucleoside diphosphate kinase related dynein intermediate chain from the ascidian, Ciona intestinalis.</title>
        <authorList>
            <person name="Padma P."/>
            <person name="Hozumi A."/>
            <person name="Ogawa K."/>
            <person name="Inaba K."/>
        </authorList>
    </citation>
    <scope>NUCLEOTIDE SEQUENCE [MRNA]</scope>
    <source>
        <tissue>Testis</tissue>
    </source>
</reference>
<keyword id="KW-0217">Developmental protein</keyword>
<keyword id="KW-0221">Differentiation</keyword>
<keyword id="KW-1015">Disulfide bond</keyword>
<keyword id="KW-0676">Redox-active center</keyword>
<keyword id="KW-1185">Reference proteome</keyword>
<keyword id="KW-0744">Spermatogenesis</keyword>
<sequence length="653" mass="73038">MAKRKEVILQETLNTQEAWEVAMNSGKLYVVDAHQKWCGPCTAIVGMLKRIKNELGDDLLRFATAQVDVIDTLEQYRGKCEPNFLFYGGGELVAAVRGCNAPLVQETIQETLKNEHKILSGEMERKVFRDVYSDTPDQEEEEEDEEEEEGGVVSKQITVALIKPDVVQNGQVDEILQKISEAGIEVLADEERMLTVEEARDFYKNKEEEEYFDQLIDYVTSGPCRVLVLTKGESGEGVVTLWRDIIGPFDAAVAKEENPDSLRAIYGTDATSNALHGSSSTEEAVRELGFFFPDFKPPTYRSAKSAASRASGRRSKTPSQKPRLQRTLAIIRPDALQAHKDSILQKIDEAGFKIAMQKEMVLTREQAESFYSEHKDTDYFEPLVKQMTCGPVLALCLAHDDAVDHWRSMLGPKVVADAVEEQPDSLRAQFRVEEAEVNMLHGSDSAEAAEEELSKIFHVEQTLAVIKPDAIDEKEQIMGKLKEAGFMISCQKDMNLSKEIASEIYKSKEGSEYYDHLIDHMTSGPTLMMVLSAENAVEKLRDIMGPTDPEVAKESHPESLRAMFAKSILENAIHSPSTNESAQEKIRIVFGDAQFDWDVNDMQAEEGEVNETSGEQPTDEQSGETEKTEEDGEHEGAQSDQQQAVSEAMEKEE</sequence>
<protein>
    <recommendedName>
        <fullName>Thioredoxin domain-containing protein 3 homolog</fullName>
    </recommendedName>
    <alternativeName>
        <fullName>Dynein intermediate chain 3</fullName>
    </alternativeName>
</protein>
<evidence type="ECO:0000250" key="1"/>
<evidence type="ECO:0000256" key="2">
    <source>
        <dbReference type="SAM" id="MobiDB-lite"/>
    </source>
</evidence>
<evidence type="ECO:0000305" key="3"/>
<gene>
    <name type="primary">CiIC3</name>
</gene>
<organism>
    <name type="scientific">Ciona intestinalis</name>
    <name type="common">Transparent sea squirt</name>
    <name type="synonym">Ascidia intestinalis</name>
    <dbReference type="NCBI Taxonomy" id="7719"/>
    <lineage>
        <taxon>Eukaryota</taxon>
        <taxon>Metazoa</taxon>
        <taxon>Chordata</taxon>
        <taxon>Tunicata</taxon>
        <taxon>Ascidiacea</taxon>
        <taxon>Phlebobranchia</taxon>
        <taxon>Cionidae</taxon>
        <taxon>Ciona</taxon>
    </lineage>
</organism>
<feature type="chain" id="PRO_0000120160" description="Thioredoxin domain-containing protein 3 homolog">
    <location>
        <begin position="1"/>
        <end position="653"/>
    </location>
</feature>
<feature type="domain" description="Thioredoxin">
    <location>
        <begin position="9"/>
        <end position="114"/>
    </location>
</feature>
<feature type="region of interest" description="NDK 1">
    <location>
        <begin position="155"/>
        <end position="299"/>
    </location>
</feature>
<feature type="region of interest" description="Disordered" evidence="2">
    <location>
        <begin position="300"/>
        <end position="323"/>
    </location>
</feature>
<feature type="region of interest" description="NDK 2">
    <location>
        <begin position="324"/>
        <end position="459"/>
    </location>
</feature>
<feature type="region of interest" description="NDK 3">
    <location>
        <begin position="459"/>
        <end position="597"/>
    </location>
</feature>
<feature type="region of interest" description="Disordered" evidence="2">
    <location>
        <begin position="603"/>
        <end position="653"/>
    </location>
</feature>
<feature type="compositionally biased region" description="Low complexity" evidence="2">
    <location>
        <begin position="301"/>
        <end position="310"/>
    </location>
</feature>
<feature type="compositionally biased region" description="Acidic residues" evidence="2">
    <location>
        <begin position="617"/>
        <end position="633"/>
    </location>
</feature>
<feature type="disulfide bond" description="Redox-active" evidence="1">
    <location>
        <begin position="38"/>
        <end position="41"/>
    </location>
</feature>
<name>TXND3_CIOIN</name>
<dbReference type="EMBL" id="AB057786">
    <property type="protein sequence ID" value="BAB68388.1"/>
    <property type="molecule type" value="mRNA"/>
</dbReference>
<dbReference type="RefSeq" id="NP_001027618.1">
    <property type="nucleotide sequence ID" value="NM_001032446.1"/>
</dbReference>
<dbReference type="SMR" id="Q95YJ5"/>
<dbReference type="STRING" id="7719.ENSCINP00000013583"/>
<dbReference type="Ensembl" id="ENSCINT00000013583.3">
    <property type="protein sequence ID" value="ENSCINP00000013583.3"/>
    <property type="gene ID" value="ENSCING00000006612.3"/>
</dbReference>
<dbReference type="GeneID" id="445617"/>
<dbReference type="KEGG" id="cin:445617"/>
<dbReference type="CTD" id="445617"/>
<dbReference type="eggNOG" id="KOG0888">
    <property type="taxonomic scope" value="Eukaryota"/>
</dbReference>
<dbReference type="eggNOG" id="KOG0907">
    <property type="taxonomic scope" value="Eukaryota"/>
</dbReference>
<dbReference type="GeneTree" id="ENSGT00940000164537"/>
<dbReference type="HOGENOM" id="CLU_016708_1_0_1"/>
<dbReference type="InParanoid" id="Q95YJ5"/>
<dbReference type="OMA" id="ERQHVSQ"/>
<dbReference type="OrthoDB" id="10263751at2759"/>
<dbReference type="TreeFam" id="TF106374"/>
<dbReference type="Proteomes" id="UP000008144">
    <property type="component" value="Chromosome 9"/>
</dbReference>
<dbReference type="GO" id="GO:0004550">
    <property type="term" value="F:nucleoside diphosphate kinase activity"/>
    <property type="evidence" value="ECO:0007669"/>
    <property type="project" value="InterPro"/>
</dbReference>
<dbReference type="GO" id="GO:0030154">
    <property type="term" value="P:cell differentiation"/>
    <property type="evidence" value="ECO:0007669"/>
    <property type="project" value="UniProtKB-KW"/>
</dbReference>
<dbReference type="GO" id="GO:0006241">
    <property type="term" value="P:CTP biosynthetic process"/>
    <property type="evidence" value="ECO:0007669"/>
    <property type="project" value="InterPro"/>
</dbReference>
<dbReference type="GO" id="GO:0006183">
    <property type="term" value="P:GTP biosynthetic process"/>
    <property type="evidence" value="ECO:0007669"/>
    <property type="project" value="InterPro"/>
</dbReference>
<dbReference type="GO" id="GO:0007283">
    <property type="term" value="P:spermatogenesis"/>
    <property type="evidence" value="ECO:0007669"/>
    <property type="project" value="UniProtKB-KW"/>
</dbReference>
<dbReference type="GO" id="GO:0006228">
    <property type="term" value="P:UTP biosynthetic process"/>
    <property type="evidence" value="ECO:0007669"/>
    <property type="project" value="InterPro"/>
</dbReference>
<dbReference type="CDD" id="cd04416">
    <property type="entry name" value="NDPk_TX"/>
    <property type="match status" value="3"/>
</dbReference>
<dbReference type="CDD" id="cd02948">
    <property type="entry name" value="TRX_NDPK"/>
    <property type="match status" value="1"/>
</dbReference>
<dbReference type="Gene3D" id="3.40.30.10">
    <property type="entry name" value="Glutaredoxin"/>
    <property type="match status" value="1"/>
</dbReference>
<dbReference type="Gene3D" id="3.30.70.141">
    <property type="entry name" value="Nucleoside diphosphate kinase-like domain"/>
    <property type="match status" value="3"/>
</dbReference>
<dbReference type="InterPro" id="IPR034907">
    <property type="entry name" value="NDK-like_dom"/>
</dbReference>
<dbReference type="InterPro" id="IPR036850">
    <property type="entry name" value="NDK-like_dom_sf"/>
</dbReference>
<dbReference type="InterPro" id="IPR001564">
    <property type="entry name" value="Nucleoside_diP_kinase"/>
</dbReference>
<dbReference type="InterPro" id="IPR036249">
    <property type="entry name" value="Thioredoxin-like_sf"/>
</dbReference>
<dbReference type="InterPro" id="IPR013766">
    <property type="entry name" value="Thioredoxin_domain"/>
</dbReference>
<dbReference type="InterPro" id="IPR051766">
    <property type="entry name" value="TXND_domain-containing"/>
</dbReference>
<dbReference type="PANTHER" id="PTHR46135">
    <property type="entry name" value="NME/NM23 FAMILY MEMBER 8"/>
    <property type="match status" value="1"/>
</dbReference>
<dbReference type="PANTHER" id="PTHR46135:SF3">
    <property type="entry name" value="NME_NM23 FAMILY MEMBER 8"/>
    <property type="match status" value="1"/>
</dbReference>
<dbReference type="Pfam" id="PF00334">
    <property type="entry name" value="NDK"/>
    <property type="match status" value="3"/>
</dbReference>
<dbReference type="Pfam" id="PF00085">
    <property type="entry name" value="Thioredoxin"/>
    <property type="match status" value="1"/>
</dbReference>
<dbReference type="PRINTS" id="PR01243">
    <property type="entry name" value="NUCDPKINASE"/>
</dbReference>
<dbReference type="SMART" id="SM00562">
    <property type="entry name" value="NDK"/>
    <property type="match status" value="3"/>
</dbReference>
<dbReference type="SUPFAM" id="SSF54919">
    <property type="entry name" value="Nucleoside diphosphate kinase, NDK"/>
    <property type="match status" value="3"/>
</dbReference>
<dbReference type="SUPFAM" id="SSF52833">
    <property type="entry name" value="Thioredoxin-like"/>
    <property type="match status" value="1"/>
</dbReference>
<dbReference type="PROSITE" id="PS51374">
    <property type="entry name" value="NDPK_LIKE"/>
    <property type="match status" value="3"/>
</dbReference>
<comment type="function">
    <text evidence="1">May be required during the final stages of sperm tail maturation. May act by reducing disulfide bonds within the sperm components (By similarity).</text>
</comment>
<comment type="tissue specificity">
    <text>Testis-specific.</text>
</comment>
<comment type="domain">
    <text>Contains 3 inactive NDK domains that each lack the active His residue, suggesting that they have no NDP kinase activity.</text>
</comment>
<comment type="similarity">
    <text evidence="3">In the C-terminal section; belongs to the NDK family.</text>
</comment>
<accession>Q95YJ5</accession>
<proteinExistence type="evidence at transcript level"/>